<accession>Q13509</accession>
<accession>A8K854</accession>
<accession>Q9BTZ0</accession>
<accession>Q9BW10</accession>
<organism>
    <name type="scientific">Homo sapiens</name>
    <name type="common">Human</name>
    <dbReference type="NCBI Taxonomy" id="9606"/>
    <lineage>
        <taxon>Eukaryota</taxon>
        <taxon>Metazoa</taxon>
        <taxon>Chordata</taxon>
        <taxon>Craniata</taxon>
        <taxon>Vertebrata</taxon>
        <taxon>Euteleostomi</taxon>
        <taxon>Mammalia</taxon>
        <taxon>Eutheria</taxon>
        <taxon>Euarchontoglires</taxon>
        <taxon>Primates</taxon>
        <taxon>Haplorrhini</taxon>
        <taxon>Catarrhini</taxon>
        <taxon>Hominidae</taxon>
        <taxon>Homo</taxon>
    </lineage>
</organism>
<reference key="1">
    <citation type="journal article" date="1998" name="Biochim. Biophys. Acta">
        <title>Cloning and sequencing of human betaIII-tubulin cDNA: induction of betaIII isotype in human prostate carcinoma cells by acute exposure to antimicrotubule agents.</title>
        <authorList>
            <person name="Ranganathan S."/>
            <person name="Dexter D.W."/>
            <person name="Benetatos C.A."/>
            <person name="Hudes G.R."/>
        </authorList>
    </citation>
    <scope>NUCLEOTIDE SEQUENCE [MRNA] (ISOFORM 1)</scope>
</reference>
<reference key="2">
    <citation type="submission" date="2001-10" db="EMBL/GenBank/DDBJ databases">
        <authorList>
            <person name="Banerjee A."/>
        </authorList>
    </citation>
    <scope>NUCLEOTIDE SEQUENCE [MRNA] (ISOFORM 1)</scope>
    <source>
        <tissue>Mammary cancer</tissue>
    </source>
</reference>
<reference key="3">
    <citation type="journal article" date="2004" name="Nat. Genet.">
        <title>Complete sequencing and characterization of 21,243 full-length human cDNAs.</title>
        <authorList>
            <person name="Ota T."/>
            <person name="Suzuki Y."/>
            <person name="Nishikawa T."/>
            <person name="Otsuki T."/>
            <person name="Sugiyama T."/>
            <person name="Irie R."/>
            <person name="Wakamatsu A."/>
            <person name="Hayashi K."/>
            <person name="Sato H."/>
            <person name="Nagai K."/>
            <person name="Kimura K."/>
            <person name="Makita H."/>
            <person name="Sekine M."/>
            <person name="Obayashi M."/>
            <person name="Nishi T."/>
            <person name="Shibahara T."/>
            <person name="Tanaka T."/>
            <person name="Ishii S."/>
            <person name="Yamamoto J."/>
            <person name="Saito K."/>
            <person name="Kawai Y."/>
            <person name="Isono Y."/>
            <person name="Nakamura Y."/>
            <person name="Nagahari K."/>
            <person name="Murakami K."/>
            <person name="Yasuda T."/>
            <person name="Iwayanagi T."/>
            <person name="Wagatsuma M."/>
            <person name="Shiratori A."/>
            <person name="Sudo H."/>
            <person name="Hosoiri T."/>
            <person name="Kaku Y."/>
            <person name="Kodaira H."/>
            <person name="Kondo H."/>
            <person name="Sugawara M."/>
            <person name="Takahashi M."/>
            <person name="Kanda K."/>
            <person name="Yokoi T."/>
            <person name="Furuya T."/>
            <person name="Kikkawa E."/>
            <person name="Omura Y."/>
            <person name="Abe K."/>
            <person name="Kamihara K."/>
            <person name="Katsuta N."/>
            <person name="Sato K."/>
            <person name="Tanikawa M."/>
            <person name="Yamazaki M."/>
            <person name="Ninomiya K."/>
            <person name="Ishibashi T."/>
            <person name="Yamashita H."/>
            <person name="Murakawa K."/>
            <person name="Fujimori K."/>
            <person name="Tanai H."/>
            <person name="Kimata M."/>
            <person name="Watanabe M."/>
            <person name="Hiraoka S."/>
            <person name="Chiba Y."/>
            <person name="Ishida S."/>
            <person name="Ono Y."/>
            <person name="Takiguchi S."/>
            <person name="Watanabe S."/>
            <person name="Yosida M."/>
            <person name="Hotuta T."/>
            <person name="Kusano J."/>
            <person name="Kanehori K."/>
            <person name="Takahashi-Fujii A."/>
            <person name="Hara H."/>
            <person name="Tanase T.-O."/>
            <person name="Nomura Y."/>
            <person name="Togiya S."/>
            <person name="Komai F."/>
            <person name="Hara R."/>
            <person name="Takeuchi K."/>
            <person name="Arita M."/>
            <person name="Imose N."/>
            <person name="Musashino K."/>
            <person name="Yuuki H."/>
            <person name="Oshima A."/>
            <person name="Sasaki N."/>
            <person name="Aotsuka S."/>
            <person name="Yoshikawa Y."/>
            <person name="Matsunawa H."/>
            <person name="Ichihara T."/>
            <person name="Shiohata N."/>
            <person name="Sano S."/>
            <person name="Moriya S."/>
            <person name="Momiyama H."/>
            <person name="Satoh N."/>
            <person name="Takami S."/>
            <person name="Terashima Y."/>
            <person name="Suzuki O."/>
            <person name="Nakagawa S."/>
            <person name="Senoh A."/>
            <person name="Mizoguchi H."/>
            <person name="Goto Y."/>
            <person name="Shimizu F."/>
            <person name="Wakebe H."/>
            <person name="Hishigaki H."/>
            <person name="Watanabe T."/>
            <person name="Sugiyama A."/>
            <person name="Takemoto M."/>
            <person name="Kawakami B."/>
            <person name="Yamazaki M."/>
            <person name="Watanabe K."/>
            <person name="Kumagai A."/>
            <person name="Itakura S."/>
            <person name="Fukuzumi Y."/>
            <person name="Fujimori Y."/>
            <person name="Komiyama M."/>
            <person name="Tashiro H."/>
            <person name="Tanigami A."/>
            <person name="Fujiwara T."/>
            <person name="Ono T."/>
            <person name="Yamada K."/>
            <person name="Fujii Y."/>
            <person name="Ozaki K."/>
            <person name="Hirao M."/>
            <person name="Ohmori Y."/>
            <person name="Kawabata A."/>
            <person name="Hikiji T."/>
            <person name="Kobatake N."/>
            <person name="Inagaki H."/>
            <person name="Ikema Y."/>
            <person name="Okamoto S."/>
            <person name="Okitani R."/>
            <person name="Kawakami T."/>
            <person name="Noguchi S."/>
            <person name="Itoh T."/>
            <person name="Shigeta K."/>
            <person name="Senba T."/>
            <person name="Matsumura K."/>
            <person name="Nakajima Y."/>
            <person name="Mizuno T."/>
            <person name="Morinaga M."/>
            <person name="Sasaki M."/>
            <person name="Togashi T."/>
            <person name="Oyama M."/>
            <person name="Hata H."/>
            <person name="Watanabe M."/>
            <person name="Komatsu T."/>
            <person name="Mizushima-Sugano J."/>
            <person name="Satoh T."/>
            <person name="Shirai Y."/>
            <person name="Takahashi Y."/>
            <person name="Nakagawa K."/>
            <person name="Okumura K."/>
            <person name="Nagase T."/>
            <person name="Nomura N."/>
            <person name="Kikuchi H."/>
            <person name="Masuho Y."/>
            <person name="Yamashita R."/>
            <person name="Nakai K."/>
            <person name="Yada T."/>
            <person name="Nakamura Y."/>
            <person name="Ohara O."/>
            <person name="Isogai T."/>
            <person name="Sugano S."/>
        </authorList>
    </citation>
    <scope>NUCLEOTIDE SEQUENCE [LARGE SCALE MRNA] (ISOFORM 2)</scope>
    <source>
        <tissue>Brain</tissue>
        <tissue>Esophagus</tissue>
    </source>
</reference>
<reference key="4">
    <citation type="journal article" date="2004" name="Nature">
        <title>The sequence and analysis of duplication-rich human chromosome 16.</title>
        <authorList>
            <person name="Martin J."/>
            <person name="Han C."/>
            <person name="Gordon L.A."/>
            <person name="Terry A."/>
            <person name="Prabhakar S."/>
            <person name="She X."/>
            <person name="Xie G."/>
            <person name="Hellsten U."/>
            <person name="Chan Y.M."/>
            <person name="Altherr M."/>
            <person name="Couronne O."/>
            <person name="Aerts A."/>
            <person name="Bajorek E."/>
            <person name="Black S."/>
            <person name="Blumer H."/>
            <person name="Branscomb E."/>
            <person name="Brown N.C."/>
            <person name="Bruno W.J."/>
            <person name="Buckingham J.M."/>
            <person name="Callen D.F."/>
            <person name="Campbell C.S."/>
            <person name="Campbell M.L."/>
            <person name="Campbell E.W."/>
            <person name="Caoile C."/>
            <person name="Challacombe J.F."/>
            <person name="Chasteen L.A."/>
            <person name="Chertkov O."/>
            <person name="Chi H.C."/>
            <person name="Christensen M."/>
            <person name="Clark L.M."/>
            <person name="Cohn J.D."/>
            <person name="Denys M."/>
            <person name="Detter J.C."/>
            <person name="Dickson M."/>
            <person name="Dimitrijevic-Bussod M."/>
            <person name="Escobar J."/>
            <person name="Fawcett J.J."/>
            <person name="Flowers D."/>
            <person name="Fotopulos D."/>
            <person name="Glavina T."/>
            <person name="Gomez M."/>
            <person name="Gonzales E."/>
            <person name="Goodstein D."/>
            <person name="Goodwin L.A."/>
            <person name="Grady D.L."/>
            <person name="Grigoriev I."/>
            <person name="Groza M."/>
            <person name="Hammon N."/>
            <person name="Hawkins T."/>
            <person name="Haydu L."/>
            <person name="Hildebrand C.E."/>
            <person name="Huang W."/>
            <person name="Israni S."/>
            <person name="Jett J."/>
            <person name="Jewett P.B."/>
            <person name="Kadner K."/>
            <person name="Kimball H."/>
            <person name="Kobayashi A."/>
            <person name="Krawczyk M.-C."/>
            <person name="Leyba T."/>
            <person name="Longmire J.L."/>
            <person name="Lopez F."/>
            <person name="Lou Y."/>
            <person name="Lowry S."/>
            <person name="Ludeman T."/>
            <person name="Manohar C.F."/>
            <person name="Mark G.A."/>
            <person name="McMurray K.L."/>
            <person name="Meincke L.J."/>
            <person name="Morgan J."/>
            <person name="Moyzis R.K."/>
            <person name="Mundt M.O."/>
            <person name="Munk A.C."/>
            <person name="Nandkeshwar R.D."/>
            <person name="Pitluck S."/>
            <person name="Pollard M."/>
            <person name="Predki P."/>
            <person name="Parson-Quintana B."/>
            <person name="Ramirez L."/>
            <person name="Rash S."/>
            <person name="Retterer J."/>
            <person name="Ricke D.O."/>
            <person name="Robinson D.L."/>
            <person name="Rodriguez A."/>
            <person name="Salamov A."/>
            <person name="Saunders E.H."/>
            <person name="Scott D."/>
            <person name="Shough T."/>
            <person name="Stallings R.L."/>
            <person name="Stalvey M."/>
            <person name="Sutherland R.D."/>
            <person name="Tapia R."/>
            <person name="Tesmer J.G."/>
            <person name="Thayer N."/>
            <person name="Thompson L.S."/>
            <person name="Tice H."/>
            <person name="Torney D.C."/>
            <person name="Tran-Gyamfi M."/>
            <person name="Tsai M."/>
            <person name="Ulanovsky L.E."/>
            <person name="Ustaszewska A."/>
            <person name="Vo N."/>
            <person name="White P.S."/>
            <person name="Williams A.L."/>
            <person name="Wills P.L."/>
            <person name="Wu J.-R."/>
            <person name="Wu K."/>
            <person name="Yang J."/>
            <person name="DeJong P."/>
            <person name="Bruce D."/>
            <person name="Doggett N.A."/>
            <person name="Deaven L."/>
            <person name="Schmutz J."/>
            <person name="Grimwood J."/>
            <person name="Richardson P."/>
            <person name="Rokhsar D.S."/>
            <person name="Eichler E.E."/>
            <person name="Gilna P."/>
            <person name="Lucas S.M."/>
            <person name="Myers R.M."/>
            <person name="Rubin E.M."/>
            <person name="Pennacchio L.A."/>
        </authorList>
    </citation>
    <scope>NUCLEOTIDE SEQUENCE [LARGE SCALE GENOMIC DNA]</scope>
</reference>
<reference key="5">
    <citation type="submission" date="2005-09" db="EMBL/GenBank/DDBJ databases">
        <authorList>
            <person name="Mural R.J."/>
            <person name="Istrail S."/>
            <person name="Sutton G."/>
            <person name="Florea L."/>
            <person name="Halpern A.L."/>
            <person name="Mobarry C.M."/>
            <person name="Lippert R."/>
            <person name="Walenz B."/>
            <person name="Shatkay H."/>
            <person name="Dew I."/>
            <person name="Miller J.R."/>
            <person name="Flanigan M.J."/>
            <person name="Edwards N.J."/>
            <person name="Bolanos R."/>
            <person name="Fasulo D."/>
            <person name="Halldorsson B.V."/>
            <person name="Hannenhalli S."/>
            <person name="Turner R."/>
            <person name="Yooseph S."/>
            <person name="Lu F."/>
            <person name="Nusskern D.R."/>
            <person name="Shue B.C."/>
            <person name="Zheng X.H."/>
            <person name="Zhong F."/>
            <person name="Delcher A.L."/>
            <person name="Huson D.H."/>
            <person name="Kravitz S.A."/>
            <person name="Mouchard L."/>
            <person name="Reinert K."/>
            <person name="Remington K.A."/>
            <person name="Clark A.G."/>
            <person name="Waterman M.S."/>
            <person name="Eichler E.E."/>
            <person name="Adams M.D."/>
            <person name="Hunkapiller M.W."/>
            <person name="Myers E.W."/>
            <person name="Venter J.C."/>
        </authorList>
    </citation>
    <scope>NUCLEOTIDE SEQUENCE [LARGE SCALE GENOMIC DNA]</scope>
</reference>
<reference key="6">
    <citation type="journal article" date="2004" name="Genome Res.">
        <title>The status, quality, and expansion of the NIH full-length cDNA project: the Mammalian Gene Collection (MGC).</title>
        <authorList>
            <consortium name="The MGC Project Team"/>
        </authorList>
    </citation>
    <scope>NUCLEOTIDE SEQUENCE [LARGE SCALE MRNA] (ISOFORM 1)</scope>
    <source>
        <tissue>Lung</tissue>
    </source>
</reference>
<reference key="7">
    <citation type="submission" date="2008-12" db="UniProtKB">
        <authorList>
            <person name="Lubec G."/>
            <person name="Afjehi-Sadat L."/>
            <person name="Chen W.-Q."/>
            <person name="Sun Y."/>
        </authorList>
    </citation>
    <scope>PROTEIN SEQUENCE OF 63-77; 104-121; 242-251; 163-174 AND 381-390</scope>
    <scope>IDENTIFICATION BY MASS SPECTROMETRY</scope>
    <source>
        <tissue>Brain</tissue>
        <tissue>Cajal-Retzius cell</tissue>
        <tissue>Fetal brain cortex</tissue>
    </source>
</reference>
<reference key="8">
    <citation type="journal article" date="2003" name="J. Child Neurol.">
        <title>Class III beta-tubulin isotype: a key cytoskeletal protein at the crossroads of developmental neurobiology and tumor neuropathology.</title>
        <authorList>
            <person name="Katsetos C.D."/>
            <person name="Legido A."/>
            <person name="Perentes E."/>
            <person name="Mork S.J."/>
        </authorList>
    </citation>
    <scope>TISSUE SPECIFICITY</scope>
</reference>
<reference key="9">
    <citation type="journal article" date="2004" name="J. Child Neurol.">
        <authorList>
            <person name="Katsetos C.D."/>
            <person name="Legido A."/>
            <person name="Perentes E."/>
            <person name="Mork S.J."/>
        </authorList>
    </citation>
    <scope>ERRATUM OF PUBMED:14736079</scope>
</reference>
<reference key="10">
    <citation type="journal article" date="2006" name="Mol. Biol. Cell">
        <title>Microtubule regulation in mitosis: tubulin phosphorylation by the cyclin-dependent kinase Cdk1.</title>
        <authorList>
            <person name="Fourest-Lieuvin A."/>
            <person name="Peris L."/>
            <person name="Gache V."/>
            <person name="Garcia-Saez I."/>
            <person name="Juillan-Binard C."/>
            <person name="Lantez V."/>
            <person name="Job D."/>
        </authorList>
    </citation>
    <scope>PHOSPHORYLATION AT SER-172 BY CDK1</scope>
</reference>
<reference key="11">
    <citation type="journal article" date="2009" name="Cell">
        <title>Evolutionary divergence of enzymatic mechanisms for posttranslational polyglycylation.</title>
        <authorList>
            <person name="Rogowski K."/>
            <person name="Juge F."/>
            <person name="van Dijk J."/>
            <person name="Wloga D."/>
            <person name="Strub J.-M."/>
            <person name="Levilliers N."/>
            <person name="Thomas D."/>
            <person name="Bre M.-H."/>
            <person name="Van Dorsselaer A."/>
            <person name="Gaertig J."/>
            <person name="Janke C."/>
        </authorList>
    </citation>
    <scope>GLYCYLATION</scope>
</reference>
<reference key="12">
    <citation type="journal article" date="2010" name="Cell">
        <title>Human TUBB3 mutations perturb microtubule dynamics, kinesin interactions, and axon guidance.</title>
        <authorList>
            <person name="Tischfield M.A."/>
            <person name="Baris H.N."/>
            <person name="Wu C."/>
            <person name="Rudolph G."/>
            <person name="Van Maldergem L."/>
            <person name="He W."/>
            <person name="Chan W.M."/>
            <person name="Andrews C."/>
            <person name="Demer J.L."/>
            <person name="Robertson R.L."/>
            <person name="Mackey D.A."/>
            <person name="Ruddle J.B."/>
            <person name="Bird T.D."/>
            <person name="Gottlob I."/>
            <person name="Pieh C."/>
            <person name="Traboulsi E.I."/>
            <person name="Pomeroy S.L."/>
            <person name="Hunter D.G."/>
            <person name="Soul J.S."/>
            <person name="Newlin A."/>
            <person name="Sabol L.J."/>
            <person name="Doherty E.J."/>
            <person name="de Uzcategui C.E."/>
            <person name="de Uzcategui N."/>
            <person name="Collins M.L."/>
            <person name="Sener E.C."/>
            <person name="Wabbels B."/>
            <person name="Hellebrand H."/>
            <person name="Meitinger T."/>
            <person name="de Berardinis T."/>
            <person name="Magli A."/>
            <person name="Schiavi C."/>
            <person name="Pastore-Trossello M."/>
            <person name="Koc F."/>
            <person name="Wong A.M."/>
            <person name="Levin A.V."/>
            <person name="Geraghty M.T."/>
            <person name="Descartes M."/>
            <person name="Flaherty M."/>
            <person name="Jamieson R.V."/>
            <person name="Moller H.U."/>
            <person name="Meuthen I."/>
            <person name="Callen D.F."/>
            <person name="Kerwin J."/>
            <person name="Lindsay S."/>
            <person name="Meindl A."/>
            <person name="Gupta M.L. Jr."/>
            <person name="Pellman D."/>
            <person name="Engle E.C."/>
        </authorList>
    </citation>
    <scope>FUNCTION</scope>
    <scope>VARIANTS CFEOM3A GLN-62; CYS-262; HIS-262; THR-302; CYS-380; LYS-410; HIS-417 AND ASN-417</scope>
    <scope>CHARACTERIZATION OF VARIANTS CFEOM3A GLN-62; CYS-262; HIS-262; THR-302; CYS-380 AND LYS-410</scope>
</reference>
<reference key="13">
    <citation type="journal article" date="2010" name="Cytoskeleton">
        <title>Tumoral and tissue-specific expression of the major human beta-tubulin isotypes.</title>
        <authorList>
            <person name="Leandro-Garcia L.J."/>
            <person name="Leskela S."/>
            <person name="Landa I."/>
            <person name="Montero-Conde C."/>
            <person name="Lopez-Jimenez E."/>
            <person name="Leton R."/>
            <person name="Cascon A."/>
            <person name="Robledo M."/>
            <person name="Rodriguez-Antona C."/>
        </authorList>
    </citation>
    <scope>TISSUE SPECIFICITY</scope>
</reference>
<reference key="14">
    <citation type="journal article" date="2014" name="Dev. Biol.">
        <title>The role of MATER in endoplasmic reticulum distribution and calcium homeostasis in mouse oocytes.</title>
        <authorList>
            <person name="Kim B."/>
            <person name="Zhang X."/>
            <person name="Kan R."/>
            <person name="Cohen R."/>
            <person name="Mukai C."/>
            <person name="Travis A.J."/>
            <person name="Coonrod S.A."/>
        </authorList>
    </citation>
    <scope>INTERACTION WITH NLRP5</scope>
</reference>
<reference key="15">
    <citation type="journal article" date="2016" name="Cell">
        <title>Graded control of microtubule severing by tubulin glutamylation.</title>
        <authorList>
            <person name="Valenstein M.L."/>
            <person name="Roll-Mecak A."/>
        </authorList>
    </citation>
    <scope>GLUTAMYLATION</scope>
</reference>
<reference key="16">
    <citation type="journal article" date="2017" name="J. Neurosci.">
        <title>Uncoupling of UNC5C with Polymerized TUBB3 in Microtubules Mediates Netrin-1 Repulsion.</title>
        <authorList>
            <person name="Shao Q."/>
            <person name="Yang T."/>
            <person name="Huang H."/>
            <person name="Alarmanazi F."/>
            <person name="Liu G."/>
        </authorList>
    </citation>
    <scope>FUNCTION</scope>
    <scope>INTERACTION WITH UNC5C</scope>
</reference>
<reference key="17">
    <citation type="journal article" date="2021" name="Am. J. Hum. Genet.">
        <title>Missense variants in DPYSL5 cause a neurodevelopmental disorder with corpus callosum agenesis and cerebellar abnormalities.</title>
        <authorList>
            <person name="Jeanne M."/>
            <person name="Demory H."/>
            <person name="Moutal A."/>
            <person name="Vuillaume M.L."/>
            <person name="Blesson S."/>
            <person name="Thepault R.A."/>
            <person name="Marouillat S."/>
            <person name="Halewa J."/>
            <person name="Maas S.M."/>
            <person name="Motazacker M.M."/>
            <person name="Mancini G.M.S."/>
            <person name="van Slegtenhorst M.A."/>
            <person name="Andreou A."/>
            <person name="Cox H."/>
            <person name="Vogt J."/>
            <person name="Laufman J."/>
            <person name="Kostandyan N."/>
            <person name="Babikyan D."/>
            <person name="Hancarova M."/>
            <person name="Bendova S."/>
            <person name="Sedlacek Z."/>
            <person name="Aldinger K.A."/>
            <person name="Sherr E.H."/>
            <person name="Argilli E."/>
            <person name="England E.M."/>
            <person name="Audebert-Bellanger S."/>
            <person name="Bonneau D."/>
            <person name="Colin E."/>
            <person name="Denomme-Pichon A.S."/>
            <person name="Gilbert-Dussardier B."/>
            <person name="Isidor B."/>
            <person name="Kuery S."/>
            <person name="Odent S."/>
            <person name="Redon R."/>
            <person name="Khanna R."/>
            <person name="Dobyns W.B."/>
            <person name="Bezieau S."/>
            <person name="Honnorat J."/>
            <person name="Lohkamp B."/>
            <person name="Toutain A."/>
            <person name="Laumonnier F."/>
        </authorList>
    </citation>
    <scope>INTERACTION WITH DPYSL5</scope>
</reference>
<reference key="18">
    <citation type="journal article" date="2024" name="Science">
        <title>Transition of human gamma-tubulin ring complex into a closed conformation during microtubule nucleation.</title>
        <authorList>
            <person name="Brito C."/>
            <person name="Serna M."/>
            <person name="Guerra P."/>
            <person name="Llorca O."/>
            <person name="Surrey T."/>
        </authorList>
    </citation>
    <scope>FUNCTION</scope>
    <scope>SUBUNIT</scope>
</reference>
<reference evidence="25 26 27 28" key="19">
    <citation type="journal article" date="2022" name="Proc. Natl. Acad. Sci. U.S.A.">
        <title>Structural transitions in the GTP cap visualized by cryo-electron microscopy of catalytically inactive microtubules.</title>
        <authorList>
            <person name="LaFrance B.J."/>
            <person name="Roostalu J."/>
            <person name="Henkin G."/>
            <person name="Greber B.J."/>
            <person name="Zhang R."/>
            <person name="Normanno D."/>
            <person name="McCollum C.O."/>
            <person name="Surrey T."/>
            <person name="Nogales E."/>
        </authorList>
    </citation>
    <scope>STRUCTURE BY ELECTRON MICROSCOPY (3.60 ANGSTROMS) IN COMPLEX WITH ALPHA-TUBULIN AND GDP</scope>
    <scope>FUNCTION</scope>
    <scope>SUBCELLULAR LOCATION</scope>
    <scope>SUBUNIT</scope>
</reference>
<reference evidence="29" key="20">
    <citation type="journal article" date="2022" name="Science">
        <title>Posttranslational modification of microtubules by the MATCAP detyrosinase.</title>
        <authorList>
            <person name="Landskron L."/>
            <person name="Bak J."/>
            <person name="Adamopoulos A."/>
            <person name="Kaplani K."/>
            <person name="Moraiti M."/>
            <person name="van den Hengel L.G."/>
            <person name="Song J.Y."/>
            <person name="Bleijerveld O.B."/>
            <person name="Nieuwenhuis J."/>
            <person name="Heidebrecht T."/>
            <person name="Henneman L."/>
            <person name="Moutin M.J."/>
            <person name="Barisic M."/>
            <person name="Taraviras S."/>
            <person name="Perrakis A."/>
            <person name="Brummelkamp T.R."/>
        </authorList>
    </citation>
    <scope>STRUCTURE BY ELECTRON MICROSCOPY (2.9 ANGSTROMS) IN COMPLEX WITH ALPHA-TUBULIN; KIAA0895L AND GDP</scope>
    <scope>SUBCELLULAR LOCATION</scope>
    <scope>SUBUNIT</scope>
</reference>
<reference evidence="30 31 32" key="21">
    <citation type="journal article" date="2024" name="Nat. Struct. Mol. Biol.">
        <title>Structure of the gamma-tubulin ring complex-capped microtubule.</title>
        <authorList>
            <person name="Aher A."/>
            <person name="Urnavicius L."/>
            <person name="Xue A."/>
            <person name="Neselu K."/>
            <person name="Kapoor T.M."/>
        </authorList>
    </citation>
    <scope>STRUCTURE BY ELECTRON MICROSCOPY (2.66 ANGSTROMS) IN COMPLEXES WITH MZT1; ACTB; TUBA1B AND THE GAMMA-TUBULIN RING COMPLEX</scope>
    <scope>FUNCTION</scope>
    <scope>SUBUNIT</scope>
</reference>
<reference key="22">
    <citation type="journal article" date="2010" name="Hum. Mol. Genet.">
        <title>Mutations in the neuronal ss-tubulin subunit TUBB3 result in malformation of cortical development and neuronal migration defects.</title>
        <authorList>
            <person name="Poirier K."/>
            <person name="Saillour Y."/>
            <person name="Bahi-Buisson N."/>
            <person name="Jaglin X.H."/>
            <person name="Fallet-Bianco C."/>
            <person name="Nabbout R."/>
            <person name="Castelnau-Ptakhine L."/>
            <person name="Roubertie A."/>
            <person name="Attie-Bitach T."/>
            <person name="Desguerre I."/>
            <person name="Genevieve D."/>
            <person name="Barnerias C."/>
            <person name="Keren B."/>
            <person name="Lebrun N."/>
            <person name="Boddaert N."/>
            <person name="Encha-Razavi F."/>
            <person name="Chelly J."/>
        </authorList>
    </citation>
    <scope>VARIANTS CDCBM1 MET-178; LYS-205; VAL-302 AND VAL-323</scope>
    <scope>CHARACTERIZATION OF VARIANTS CDCBM1 MET-178; LYS-205; VAL-302 AND VAL-323</scope>
</reference>
<gene>
    <name type="primary">TUBB3</name>
    <name type="synonym">TUBB4</name>
</gene>
<protein>
    <recommendedName>
        <fullName>Tubulin beta-3 chain</fullName>
    </recommendedName>
    <alternativeName>
        <fullName>Tubulin beta-4 chain</fullName>
    </alternativeName>
    <alternativeName>
        <fullName>Tubulin beta-III</fullName>
    </alternativeName>
</protein>
<dbReference type="EMBL" id="U47634">
    <property type="protein sequence ID" value="AAC52035.1"/>
    <property type="molecule type" value="mRNA"/>
</dbReference>
<dbReference type="EMBL" id="AF427491">
    <property type="protein sequence ID" value="AAL28094.1"/>
    <property type="molecule type" value="mRNA"/>
</dbReference>
<dbReference type="EMBL" id="AK122757">
    <property type="protein sequence ID" value="BAG53710.1"/>
    <property type="molecule type" value="mRNA"/>
</dbReference>
<dbReference type="EMBL" id="AK292219">
    <property type="protein sequence ID" value="BAF84908.1"/>
    <property type="molecule type" value="mRNA"/>
</dbReference>
<dbReference type="EMBL" id="AC092143">
    <property type="status" value="NOT_ANNOTATED_CDS"/>
    <property type="molecule type" value="Genomic_DNA"/>
</dbReference>
<dbReference type="EMBL" id="CH471184">
    <property type="protein sequence ID" value="EAW66674.1"/>
    <property type="molecule type" value="Genomic_DNA"/>
</dbReference>
<dbReference type="EMBL" id="BC000748">
    <property type="protein sequence ID" value="AAH00748.1"/>
    <property type="molecule type" value="mRNA"/>
</dbReference>
<dbReference type="EMBL" id="BC003021">
    <property type="protein sequence ID" value="AAH03021.2"/>
    <property type="molecule type" value="mRNA"/>
</dbReference>
<dbReference type="CCDS" id="CCDS10988.1">
    <molecule id="Q13509-1"/>
</dbReference>
<dbReference type="CCDS" id="CCDS56012.1">
    <molecule id="Q13509-2"/>
</dbReference>
<dbReference type="RefSeq" id="NP_001184110.1">
    <molecule id="Q13509-2"/>
    <property type="nucleotide sequence ID" value="NM_001197181.2"/>
</dbReference>
<dbReference type="RefSeq" id="NP_006077.2">
    <molecule id="Q13509-1"/>
    <property type="nucleotide sequence ID" value="NM_006086.4"/>
</dbReference>
<dbReference type="PDB" id="5IJ0">
    <property type="method" value="EM"/>
    <property type="resolution" value="3.80 A"/>
    <property type="chains" value="B=1-426"/>
</dbReference>
<dbReference type="PDB" id="5IJ9">
    <property type="method" value="EM"/>
    <property type="resolution" value="3.70 A"/>
    <property type="chains" value="B=1-426"/>
</dbReference>
<dbReference type="PDB" id="5JCO">
    <property type="method" value="EM"/>
    <property type="resolution" value="4.00 A"/>
    <property type="chains" value="C/D/I/J/K/L=1-426"/>
</dbReference>
<dbReference type="PDB" id="6E7B">
    <property type="method" value="EM"/>
    <property type="resolution" value="3.50 A"/>
    <property type="chains" value="B=1-426"/>
</dbReference>
<dbReference type="PDB" id="6S8L">
    <property type="method" value="X-ray"/>
    <property type="resolution" value="1.80 A"/>
    <property type="chains" value="B=1-450"/>
</dbReference>
<dbReference type="PDB" id="6WSL">
    <property type="method" value="EM"/>
    <property type="resolution" value="3.10 A"/>
    <property type="chains" value="B/F=1-450"/>
</dbReference>
<dbReference type="PDB" id="7LXB">
    <property type="method" value="EM"/>
    <property type="resolution" value="3.26 A"/>
    <property type="chains" value="B/D/F/H/J/L/N/P=1-450"/>
</dbReference>
<dbReference type="PDB" id="7M18">
    <property type="method" value="EM"/>
    <property type="resolution" value="3.38 A"/>
    <property type="chains" value="B/D/F/H/J/L/N/P=1-450"/>
</dbReference>
<dbReference type="PDB" id="7M20">
    <property type="method" value="EM"/>
    <property type="resolution" value="3.84 A"/>
    <property type="chains" value="B/D/F/H/J/L/N/P/R=1-450"/>
</dbReference>
<dbReference type="PDB" id="7PJF">
    <property type="method" value="X-ray"/>
    <property type="resolution" value="1.86 A"/>
    <property type="chains" value="B=1-450"/>
</dbReference>
<dbReference type="PDB" id="7SJ7">
    <property type="method" value="EM"/>
    <property type="resolution" value="3.80 A"/>
    <property type="chains" value="B/D/F/G/H/I=1-450"/>
</dbReference>
<dbReference type="PDB" id="7SJ8">
    <property type="method" value="EM"/>
    <property type="resolution" value="3.60 A"/>
    <property type="chains" value="B/D/F/G/H/I=1-450"/>
</dbReference>
<dbReference type="PDB" id="7SJ9">
    <property type="method" value="EM"/>
    <property type="resolution" value="3.80 A"/>
    <property type="chains" value="B/D/F/G/H/I=1-450"/>
</dbReference>
<dbReference type="PDB" id="7SJA">
    <property type="method" value="EM"/>
    <property type="resolution" value="3.80 A"/>
    <property type="chains" value="B/D/F/G/H/I=1-450"/>
</dbReference>
<dbReference type="PDB" id="7Z6S">
    <property type="method" value="EM"/>
    <property type="resolution" value="2.90 A"/>
    <property type="chains" value="B/H=1-450"/>
</dbReference>
<dbReference type="PDB" id="8VRJ">
    <property type="method" value="EM"/>
    <property type="resolution" value="7.70 A"/>
    <property type="chains" value="2/o/p/q/r/s/t/u/v/w/x/y/z=1-450"/>
</dbReference>
<dbReference type="PDB" id="8VRK">
    <property type="method" value="EM"/>
    <property type="resolution" value="8.50 A"/>
    <property type="chains" value="2/o/p/q/r/s/t/u/v/w/x/y/z=1-450"/>
</dbReference>
<dbReference type="PDB" id="8VT7">
    <property type="method" value="EM"/>
    <property type="resolution" value="2.66 A"/>
    <property type="chains" value="A/F=1-450"/>
</dbReference>
<dbReference type="PDBsum" id="5IJ0"/>
<dbReference type="PDBsum" id="5IJ9"/>
<dbReference type="PDBsum" id="5JCO"/>
<dbReference type="PDBsum" id="6E7B"/>
<dbReference type="PDBsum" id="6S8L"/>
<dbReference type="PDBsum" id="6WSL"/>
<dbReference type="PDBsum" id="7LXB"/>
<dbReference type="PDBsum" id="7M18"/>
<dbReference type="PDBsum" id="7M20"/>
<dbReference type="PDBsum" id="7PJF"/>
<dbReference type="PDBsum" id="7SJ7"/>
<dbReference type="PDBsum" id="7SJ8"/>
<dbReference type="PDBsum" id="7SJ9"/>
<dbReference type="PDBsum" id="7SJA"/>
<dbReference type="PDBsum" id="7Z6S"/>
<dbReference type="PDBsum" id="8VRJ"/>
<dbReference type="PDBsum" id="8VRK"/>
<dbReference type="PDBsum" id="8VT7"/>
<dbReference type="EMDB" id="EMD-14529"/>
<dbReference type="EMDB" id="EMD-21893"/>
<dbReference type="EMDB" id="EMD-23569"/>
<dbReference type="EMDB" id="EMD-23615"/>
<dbReference type="EMDB" id="EMD-23627"/>
<dbReference type="EMDB" id="EMD-25156"/>
<dbReference type="EMDB" id="EMD-25157"/>
<dbReference type="EMDB" id="EMD-25159"/>
<dbReference type="EMDB" id="EMD-25160"/>
<dbReference type="EMDB" id="EMD-43482"/>
<dbReference type="EMDB" id="EMD-43483"/>
<dbReference type="EMDB" id="EMD-43519"/>
<dbReference type="EMDB" id="EMD-8094"/>
<dbReference type="EMDB" id="EMD-8095"/>
<dbReference type="EMDB" id="EMD-8150"/>
<dbReference type="EMDB" id="EMD-8997"/>
<dbReference type="SMR" id="Q13509"/>
<dbReference type="BioGRID" id="115654">
    <property type="interactions" value="469"/>
</dbReference>
<dbReference type="CORUM" id="Q13509"/>
<dbReference type="DIP" id="DIP-31505N"/>
<dbReference type="FunCoup" id="Q13509">
    <property type="interactions" value="2244"/>
</dbReference>
<dbReference type="IntAct" id="Q13509">
    <property type="interactions" value="355"/>
</dbReference>
<dbReference type="MINT" id="Q13509"/>
<dbReference type="STRING" id="9606.ENSP00000320295"/>
<dbReference type="BindingDB" id="Q13509"/>
<dbReference type="ChEMBL" id="CHEMBL2597"/>
<dbReference type="DrugBank" id="DB05147">
    <property type="generic name" value="CYT997"/>
</dbReference>
<dbReference type="DrugBank" id="DB01873">
    <property type="generic name" value="Epothilone D"/>
</dbReference>
<dbReference type="DrugBank" id="DB04845">
    <property type="generic name" value="Ixabepilone"/>
</dbReference>
<dbReference type="DrugBank" id="DB03010">
    <property type="generic name" value="Patupilone"/>
</dbReference>
<dbReference type="DrugBank" id="DB12695">
    <property type="generic name" value="Phenethyl Isothiocyanate"/>
</dbReference>
<dbReference type="DrugBank" id="DB06042">
    <property type="generic name" value="ZEN-012"/>
</dbReference>
<dbReference type="DrugCentral" id="Q13509"/>
<dbReference type="GuidetoPHARMACOLOGY" id="2752"/>
<dbReference type="GlyGen" id="Q13509">
    <property type="glycosylation" value="2 sites, 1 N-linked glycan (1 site), 1 O-linked glycan (1 site)"/>
</dbReference>
<dbReference type="iPTMnet" id="Q13509"/>
<dbReference type="MetOSite" id="Q13509"/>
<dbReference type="PhosphoSitePlus" id="Q13509"/>
<dbReference type="SwissPalm" id="Q13509"/>
<dbReference type="BioMuta" id="TUBB3"/>
<dbReference type="DMDM" id="20455526"/>
<dbReference type="OGP" id="Q13509"/>
<dbReference type="jPOST" id="Q13509"/>
<dbReference type="MassIVE" id="Q13509"/>
<dbReference type="PaxDb" id="9606-ENSP00000320295"/>
<dbReference type="PeptideAtlas" id="Q13509"/>
<dbReference type="PRIDE" id="Q13509"/>
<dbReference type="ProteomicsDB" id="1874"/>
<dbReference type="ProteomicsDB" id="59510">
    <molecule id="Q13509-1"/>
</dbReference>
<dbReference type="Pumba" id="Q13509"/>
<dbReference type="TopDownProteomics" id="Q13509-1">
    <molecule id="Q13509-1"/>
</dbReference>
<dbReference type="ABCD" id="Q13509">
    <property type="antibodies" value="7 sequenced antibodies"/>
</dbReference>
<dbReference type="Antibodypedia" id="54822">
    <property type="antibodies" value="1166 antibodies from 47 providers"/>
</dbReference>
<dbReference type="DNASU" id="10381"/>
<dbReference type="Ensembl" id="ENST00000315491.12">
    <molecule id="Q13509-1"/>
    <property type="protein sequence ID" value="ENSP00000320295.7"/>
    <property type="gene ID" value="ENSG00000258947.8"/>
</dbReference>
<dbReference type="Ensembl" id="ENST00000554444.5">
    <molecule id="Q13509-2"/>
    <property type="protein sequence ID" value="ENSP00000451617.1"/>
    <property type="gene ID" value="ENSG00000258947.8"/>
</dbReference>
<dbReference type="GeneID" id="10381"/>
<dbReference type="KEGG" id="hsa:10381"/>
<dbReference type="MANE-Select" id="ENST00000315491.12">
    <property type="protein sequence ID" value="ENSP00000320295.7"/>
    <property type="RefSeq nucleotide sequence ID" value="NM_006086.4"/>
    <property type="RefSeq protein sequence ID" value="NP_006077.2"/>
</dbReference>
<dbReference type="UCSC" id="uc002fph.2">
    <molecule id="Q13509-1"/>
    <property type="organism name" value="human"/>
</dbReference>
<dbReference type="AGR" id="HGNC:20772"/>
<dbReference type="CTD" id="10381"/>
<dbReference type="DisGeNET" id="10381"/>
<dbReference type="GeneCards" id="TUBB3"/>
<dbReference type="GeneReviews" id="TUBB3"/>
<dbReference type="HGNC" id="HGNC:20772">
    <property type="gene designation" value="TUBB3"/>
</dbReference>
<dbReference type="HPA" id="ENSG00000258947">
    <property type="expression patterns" value="Tissue enriched (brain)"/>
</dbReference>
<dbReference type="MalaCards" id="TUBB3"/>
<dbReference type="MIM" id="600638">
    <property type="type" value="phenotype"/>
</dbReference>
<dbReference type="MIM" id="602661">
    <property type="type" value="gene"/>
</dbReference>
<dbReference type="MIM" id="614039">
    <property type="type" value="phenotype"/>
</dbReference>
<dbReference type="neXtProt" id="NX_Q13509"/>
<dbReference type="OpenTargets" id="ENSG00000258947"/>
<dbReference type="Orphanet" id="45358">
    <property type="disease" value="Congenital fibrosis of extraocular muscles"/>
</dbReference>
<dbReference type="Orphanet" id="300570">
    <property type="disease" value="Cortical dysgenesis with pontocerebellar hypoplasia due to TUBB3 mutation"/>
</dbReference>
<dbReference type="Orphanet" id="467166">
    <property type="disease" value="Tubulinopathy-associated dysgyria"/>
</dbReference>
<dbReference type="PharmGKB" id="PA134953867"/>
<dbReference type="VEuPathDB" id="HostDB:ENSG00000258947"/>
<dbReference type="eggNOG" id="KOG1375">
    <property type="taxonomic scope" value="Eukaryota"/>
</dbReference>
<dbReference type="GeneTree" id="ENSGT00940000159115"/>
<dbReference type="HOGENOM" id="CLU_015718_0_0_1"/>
<dbReference type="InParanoid" id="Q13509"/>
<dbReference type="OMA" id="RCSMREI"/>
<dbReference type="OrthoDB" id="1662883at2759"/>
<dbReference type="PAN-GO" id="Q13509">
    <property type="GO annotations" value="7 GO annotations based on evolutionary models"/>
</dbReference>
<dbReference type="PhylomeDB" id="Q13509"/>
<dbReference type="TreeFam" id="TF300298"/>
<dbReference type="PathwayCommons" id="Q13509"/>
<dbReference type="Reactome" id="R-HSA-1445148">
    <property type="pathway name" value="Translocation of SLC2A4 (GLUT4) to the plasma membrane"/>
</dbReference>
<dbReference type="Reactome" id="R-HSA-190840">
    <property type="pathway name" value="Microtubule-dependent trafficking of connexons from Golgi to the plasma membrane"/>
</dbReference>
<dbReference type="Reactome" id="R-HSA-190861">
    <property type="pathway name" value="Gap junction assembly"/>
</dbReference>
<dbReference type="Reactome" id="R-HSA-2132295">
    <property type="pathway name" value="MHC class II antigen presentation"/>
</dbReference>
<dbReference type="Reactome" id="R-HSA-2467813">
    <property type="pathway name" value="Separation of Sister Chromatids"/>
</dbReference>
<dbReference type="Reactome" id="R-HSA-2500257">
    <property type="pathway name" value="Resolution of Sister Chromatid Cohesion"/>
</dbReference>
<dbReference type="Reactome" id="R-HSA-3371497">
    <property type="pathway name" value="HSP90 chaperone cycle for steroid hormone receptors (SHR) in the presence of ligand"/>
</dbReference>
<dbReference type="Reactome" id="R-HSA-380320">
    <property type="pathway name" value="Recruitment of NuMA to mitotic centrosomes"/>
</dbReference>
<dbReference type="Reactome" id="R-HSA-389957">
    <property type="pathway name" value="Prefoldin mediated transfer of substrate to CCT/TriC"/>
</dbReference>
<dbReference type="Reactome" id="R-HSA-389960">
    <property type="pathway name" value="Formation of tubulin folding intermediates by CCT/TriC"/>
</dbReference>
<dbReference type="Reactome" id="R-HSA-389977">
    <property type="pathway name" value="Post-chaperonin tubulin folding pathway"/>
</dbReference>
<dbReference type="Reactome" id="R-HSA-437239">
    <property type="pathway name" value="Recycling pathway of L1"/>
</dbReference>
<dbReference type="Reactome" id="R-HSA-5610787">
    <property type="pathway name" value="Hedgehog 'off' state"/>
</dbReference>
<dbReference type="Reactome" id="R-HSA-5617833">
    <property type="pathway name" value="Cilium Assembly"/>
</dbReference>
<dbReference type="Reactome" id="R-HSA-5620924">
    <property type="pathway name" value="Intraflagellar transport"/>
</dbReference>
<dbReference type="Reactome" id="R-HSA-5626467">
    <property type="pathway name" value="RHO GTPases activate IQGAPs"/>
</dbReference>
<dbReference type="Reactome" id="R-HSA-5663220">
    <property type="pathway name" value="RHO GTPases Activate Formins"/>
</dbReference>
<dbReference type="Reactome" id="R-HSA-6807878">
    <property type="pathway name" value="COPI-mediated anterograde transport"/>
</dbReference>
<dbReference type="Reactome" id="R-HSA-6811434">
    <property type="pathway name" value="COPI-dependent Golgi-to-ER retrograde traffic"/>
</dbReference>
<dbReference type="Reactome" id="R-HSA-6811436">
    <property type="pathway name" value="COPI-independent Golgi-to-ER retrograde traffic"/>
</dbReference>
<dbReference type="Reactome" id="R-HSA-68877">
    <property type="pathway name" value="Mitotic Prometaphase"/>
</dbReference>
<dbReference type="Reactome" id="R-HSA-8852276">
    <property type="pathway name" value="The role of GTSE1 in G2/M progression after G2 checkpoint"/>
</dbReference>
<dbReference type="Reactome" id="R-HSA-8955332">
    <property type="pathway name" value="Carboxyterminal post-translational modifications of tubulin"/>
</dbReference>
<dbReference type="Reactome" id="R-HSA-9609690">
    <property type="pathway name" value="HCMV Early Events"/>
</dbReference>
<dbReference type="Reactome" id="R-HSA-9609736">
    <property type="pathway name" value="Assembly and cell surface presentation of NMDA receptors"/>
</dbReference>
<dbReference type="Reactome" id="R-HSA-9619483">
    <property type="pathway name" value="Activation of AMPK downstream of NMDARs"/>
</dbReference>
<dbReference type="Reactome" id="R-HSA-9646399">
    <property type="pathway name" value="Aggrephagy"/>
</dbReference>
<dbReference type="Reactome" id="R-HSA-9648025">
    <property type="pathway name" value="EML4 and NUDC in mitotic spindle formation"/>
</dbReference>
<dbReference type="Reactome" id="R-HSA-9668328">
    <property type="pathway name" value="Sealing of the nuclear envelope (NE) by ESCRT-III"/>
</dbReference>
<dbReference type="Reactome" id="R-HSA-983189">
    <property type="pathway name" value="Kinesins"/>
</dbReference>
<dbReference type="Reactome" id="R-HSA-9833482">
    <property type="pathway name" value="PKR-mediated signaling"/>
</dbReference>
<dbReference type="SignaLink" id="Q13509"/>
<dbReference type="SIGNOR" id="Q13509"/>
<dbReference type="BioGRID-ORCS" id="10381">
    <property type="hits" value="93 hits in 1167 CRISPR screens"/>
</dbReference>
<dbReference type="CD-CODE" id="8C2F96ED">
    <property type="entry name" value="Centrosome"/>
</dbReference>
<dbReference type="CD-CODE" id="91857CE7">
    <property type="entry name" value="Nucleolus"/>
</dbReference>
<dbReference type="CD-CODE" id="DEE660B4">
    <property type="entry name" value="Stress granule"/>
</dbReference>
<dbReference type="ChiTaRS" id="TUBB3">
    <property type="organism name" value="human"/>
</dbReference>
<dbReference type="GeneWiki" id="TUBB3"/>
<dbReference type="GenomeRNAi" id="10381"/>
<dbReference type="Pharos" id="Q13509">
    <property type="development level" value="Tclin"/>
</dbReference>
<dbReference type="PRO" id="PR:Q13509"/>
<dbReference type="Proteomes" id="UP000005640">
    <property type="component" value="Chromosome 16"/>
</dbReference>
<dbReference type="RNAct" id="Q13509">
    <property type="molecule type" value="protein"/>
</dbReference>
<dbReference type="Bgee" id="ENSG00000258947">
    <property type="expression patterns" value="Expressed in cortical plate and 99 other cell types or tissues"/>
</dbReference>
<dbReference type="ExpressionAtlas" id="Q13509">
    <property type="expression patterns" value="baseline and differential"/>
</dbReference>
<dbReference type="GO" id="GO:0030424">
    <property type="term" value="C:axon"/>
    <property type="evidence" value="ECO:0000250"/>
    <property type="project" value="ARUK-UCL"/>
</dbReference>
<dbReference type="GO" id="GO:0071944">
    <property type="term" value="C:cell periphery"/>
    <property type="evidence" value="ECO:0007669"/>
    <property type="project" value="Ensembl"/>
</dbReference>
<dbReference type="GO" id="GO:0005737">
    <property type="term" value="C:cytoplasm"/>
    <property type="evidence" value="ECO:0000318"/>
    <property type="project" value="GO_Central"/>
</dbReference>
<dbReference type="GO" id="GO:0030425">
    <property type="term" value="C:dendrite"/>
    <property type="evidence" value="ECO:0000250"/>
    <property type="project" value="ParkinsonsUK-UCL"/>
</dbReference>
<dbReference type="GO" id="GO:0070062">
    <property type="term" value="C:extracellular exosome"/>
    <property type="evidence" value="ECO:0007005"/>
    <property type="project" value="UniProtKB"/>
</dbReference>
<dbReference type="GO" id="GO:0030175">
    <property type="term" value="C:filopodium"/>
    <property type="evidence" value="ECO:0000250"/>
    <property type="project" value="UniProtKB"/>
</dbReference>
<dbReference type="GO" id="GO:0030426">
    <property type="term" value="C:growth cone"/>
    <property type="evidence" value="ECO:0000250"/>
    <property type="project" value="UniProtKB"/>
</dbReference>
<dbReference type="GO" id="GO:0045171">
    <property type="term" value="C:intercellular bridge"/>
    <property type="evidence" value="ECO:0000314"/>
    <property type="project" value="HPA"/>
</dbReference>
<dbReference type="GO" id="GO:0030027">
    <property type="term" value="C:lamellipodium"/>
    <property type="evidence" value="ECO:0000250"/>
    <property type="project" value="UniProtKB"/>
</dbReference>
<dbReference type="GO" id="GO:0005874">
    <property type="term" value="C:microtubule"/>
    <property type="evidence" value="ECO:0000314"/>
    <property type="project" value="UniProtKB"/>
</dbReference>
<dbReference type="GO" id="GO:0015630">
    <property type="term" value="C:microtubule cytoskeleton"/>
    <property type="evidence" value="ECO:0000314"/>
    <property type="project" value="HPA"/>
</dbReference>
<dbReference type="GO" id="GO:0072686">
    <property type="term" value="C:mitotic spindle"/>
    <property type="evidence" value="ECO:0000314"/>
    <property type="project" value="HPA"/>
</dbReference>
<dbReference type="GO" id="GO:0043025">
    <property type="term" value="C:neuronal cell body"/>
    <property type="evidence" value="ECO:0007669"/>
    <property type="project" value="Ensembl"/>
</dbReference>
<dbReference type="GO" id="GO:0005634">
    <property type="term" value="C:nucleus"/>
    <property type="evidence" value="ECO:0007005"/>
    <property type="project" value="UniProtKB"/>
</dbReference>
<dbReference type="GO" id="GO:0005525">
    <property type="term" value="F:GTP binding"/>
    <property type="evidence" value="ECO:0000314"/>
    <property type="project" value="UniProtKB"/>
</dbReference>
<dbReference type="GO" id="GO:0003924">
    <property type="term" value="F:GTPase activity"/>
    <property type="evidence" value="ECO:0007669"/>
    <property type="project" value="InterPro"/>
</dbReference>
<dbReference type="GO" id="GO:0046872">
    <property type="term" value="F:metal ion binding"/>
    <property type="evidence" value="ECO:0007669"/>
    <property type="project" value="UniProtKB-KW"/>
</dbReference>
<dbReference type="GO" id="GO:1990890">
    <property type="term" value="F:netrin receptor binding"/>
    <property type="evidence" value="ECO:0000353"/>
    <property type="project" value="UniProtKB"/>
</dbReference>
<dbReference type="GO" id="GO:0042277">
    <property type="term" value="F:peptide binding"/>
    <property type="evidence" value="ECO:0007669"/>
    <property type="project" value="Ensembl"/>
</dbReference>
<dbReference type="GO" id="GO:0005200">
    <property type="term" value="F:structural constituent of cytoskeleton"/>
    <property type="evidence" value="ECO:0000314"/>
    <property type="project" value="UniProtKB"/>
</dbReference>
<dbReference type="GO" id="GO:0007411">
    <property type="term" value="P:axon guidance"/>
    <property type="evidence" value="ECO:0000315"/>
    <property type="project" value="UniProtKB"/>
</dbReference>
<dbReference type="GO" id="GO:1990791">
    <property type="term" value="P:dorsal root ganglion development"/>
    <property type="evidence" value="ECO:0000314"/>
    <property type="project" value="UniProtKB"/>
</dbReference>
<dbReference type="GO" id="GO:0000226">
    <property type="term" value="P:microtubule cytoskeleton organization"/>
    <property type="evidence" value="ECO:0000314"/>
    <property type="project" value="UniProtKB"/>
</dbReference>
<dbReference type="GO" id="GO:0000278">
    <property type="term" value="P:mitotic cell cycle"/>
    <property type="evidence" value="ECO:0000318"/>
    <property type="project" value="GO_Central"/>
</dbReference>
<dbReference type="CDD" id="cd02187">
    <property type="entry name" value="beta_tubulin"/>
    <property type="match status" value="1"/>
</dbReference>
<dbReference type="FunFam" id="1.10.287.600:FF:000002">
    <property type="entry name" value="Tubulin beta chain"/>
    <property type="match status" value="1"/>
</dbReference>
<dbReference type="FunFam" id="3.30.1330.20:FF:000002">
    <property type="entry name" value="Tubulin beta chain"/>
    <property type="match status" value="1"/>
</dbReference>
<dbReference type="FunFam" id="3.40.50.1440:FF:000003">
    <property type="entry name" value="Tubulin beta chain"/>
    <property type="match status" value="1"/>
</dbReference>
<dbReference type="Gene3D" id="1.10.287.600">
    <property type="entry name" value="Helix hairpin bin"/>
    <property type="match status" value="1"/>
</dbReference>
<dbReference type="Gene3D" id="3.30.1330.20">
    <property type="entry name" value="Tubulin/FtsZ, C-terminal domain"/>
    <property type="match status" value="1"/>
</dbReference>
<dbReference type="Gene3D" id="3.40.50.1440">
    <property type="entry name" value="Tubulin/FtsZ, GTPase domain"/>
    <property type="match status" value="1"/>
</dbReference>
<dbReference type="InterPro" id="IPR013838">
    <property type="entry name" value="Beta-tubulin_BS"/>
</dbReference>
<dbReference type="InterPro" id="IPR002453">
    <property type="entry name" value="Beta_tubulin"/>
</dbReference>
<dbReference type="InterPro" id="IPR008280">
    <property type="entry name" value="Tub_FtsZ_C"/>
</dbReference>
<dbReference type="InterPro" id="IPR000217">
    <property type="entry name" value="Tubulin"/>
</dbReference>
<dbReference type="InterPro" id="IPR037103">
    <property type="entry name" value="Tubulin/FtsZ-like_C"/>
</dbReference>
<dbReference type="InterPro" id="IPR018316">
    <property type="entry name" value="Tubulin/FtsZ_2-layer-sand-dom"/>
</dbReference>
<dbReference type="InterPro" id="IPR036525">
    <property type="entry name" value="Tubulin/FtsZ_GTPase_sf"/>
</dbReference>
<dbReference type="InterPro" id="IPR023123">
    <property type="entry name" value="Tubulin_C"/>
</dbReference>
<dbReference type="InterPro" id="IPR017975">
    <property type="entry name" value="Tubulin_CS"/>
</dbReference>
<dbReference type="InterPro" id="IPR003008">
    <property type="entry name" value="Tubulin_FtsZ_GTPase"/>
</dbReference>
<dbReference type="PANTHER" id="PTHR11588">
    <property type="entry name" value="TUBULIN"/>
    <property type="match status" value="1"/>
</dbReference>
<dbReference type="Pfam" id="PF00091">
    <property type="entry name" value="Tubulin"/>
    <property type="match status" value="1"/>
</dbReference>
<dbReference type="Pfam" id="PF03953">
    <property type="entry name" value="Tubulin_C"/>
    <property type="match status" value="1"/>
</dbReference>
<dbReference type="PRINTS" id="PR01163">
    <property type="entry name" value="BETATUBULIN"/>
</dbReference>
<dbReference type="PRINTS" id="PR01161">
    <property type="entry name" value="TUBULIN"/>
</dbReference>
<dbReference type="SMART" id="SM00864">
    <property type="entry name" value="Tubulin"/>
    <property type="match status" value="1"/>
</dbReference>
<dbReference type="SMART" id="SM00865">
    <property type="entry name" value="Tubulin_C"/>
    <property type="match status" value="1"/>
</dbReference>
<dbReference type="SUPFAM" id="SSF55307">
    <property type="entry name" value="Tubulin C-terminal domain-like"/>
    <property type="match status" value="1"/>
</dbReference>
<dbReference type="SUPFAM" id="SSF52490">
    <property type="entry name" value="Tubulin nucleotide-binding domain-like"/>
    <property type="match status" value="1"/>
</dbReference>
<dbReference type="PROSITE" id="PS00227">
    <property type="entry name" value="TUBULIN"/>
    <property type="match status" value="1"/>
</dbReference>
<dbReference type="PROSITE" id="PS00228">
    <property type="entry name" value="TUBULIN_B_AUTOREG"/>
    <property type="match status" value="1"/>
</dbReference>
<name>TBB3_HUMAN</name>
<evidence type="ECO:0000250" key="1">
    <source>
        <dbReference type="UniProtKB" id="P07437"/>
    </source>
</evidence>
<evidence type="ECO:0000250" key="2">
    <source>
        <dbReference type="UniProtKB" id="P68363"/>
    </source>
</evidence>
<evidence type="ECO:0000250" key="3">
    <source>
        <dbReference type="UniProtKB" id="P99024"/>
    </source>
</evidence>
<evidence type="ECO:0000250" key="4">
    <source>
        <dbReference type="UniProtKB" id="Q2T9S0"/>
    </source>
</evidence>
<evidence type="ECO:0000250" key="5">
    <source>
        <dbReference type="UniProtKB" id="Q9ERD7"/>
    </source>
</evidence>
<evidence type="ECO:0000256" key="6">
    <source>
        <dbReference type="SAM" id="MobiDB-lite"/>
    </source>
</evidence>
<evidence type="ECO:0000269" key="7">
    <source>
    </source>
</evidence>
<evidence type="ECO:0000269" key="8">
    <source>
    </source>
</evidence>
<evidence type="ECO:0000269" key="9">
    <source>
    </source>
</evidence>
<evidence type="ECO:0000269" key="10">
    <source>
    </source>
</evidence>
<evidence type="ECO:0000269" key="11">
    <source>
    </source>
</evidence>
<evidence type="ECO:0000269" key="12">
    <source>
    </source>
</evidence>
<evidence type="ECO:0000269" key="13">
    <source>
    </source>
</evidence>
<evidence type="ECO:0000269" key="14">
    <source>
    </source>
</evidence>
<evidence type="ECO:0000269" key="15">
    <source>
    </source>
</evidence>
<evidence type="ECO:0000269" key="16">
    <source>
    </source>
</evidence>
<evidence type="ECO:0000269" key="17">
    <source>
    </source>
</evidence>
<evidence type="ECO:0000269" key="18">
    <source>
    </source>
</evidence>
<evidence type="ECO:0000269" key="19">
    <source>
    </source>
</evidence>
<evidence type="ECO:0000303" key="20">
    <source>
    </source>
</evidence>
<evidence type="ECO:0000305" key="21"/>
<evidence type="ECO:0000305" key="22">
    <source>
    </source>
</evidence>
<evidence type="ECO:0000305" key="23">
    <source>
    </source>
</evidence>
<evidence type="ECO:0000305" key="24">
    <source>
    </source>
</evidence>
<evidence type="ECO:0007744" key="25">
    <source>
        <dbReference type="PDB" id="7SJ7"/>
    </source>
</evidence>
<evidence type="ECO:0007744" key="26">
    <source>
        <dbReference type="PDB" id="7SJ8"/>
    </source>
</evidence>
<evidence type="ECO:0007744" key="27">
    <source>
        <dbReference type="PDB" id="7SJ9"/>
    </source>
</evidence>
<evidence type="ECO:0007744" key="28">
    <source>
        <dbReference type="PDB" id="7SJA"/>
    </source>
</evidence>
<evidence type="ECO:0007744" key="29">
    <source>
        <dbReference type="PDB" id="7Z6S"/>
    </source>
</evidence>
<evidence type="ECO:0007744" key="30">
    <source>
        <dbReference type="PDB" id="8VRJ"/>
    </source>
</evidence>
<evidence type="ECO:0007744" key="31">
    <source>
        <dbReference type="PDB" id="8VRK"/>
    </source>
</evidence>
<evidence type="ECO:0007744" key="32">
    <source>
        <dbReference type="PDB" id="8VT7"/>
    </source>
</evidence>
<evidence type="ECO:0007829" key="33">
    <source>
        <dbReference type="PDB" id="6S8L"/>
    </source>
</evidence>
<evidence type="ECO:0007829" key="34">
    <source>
        <dbReference type="PDB" id="7M18"/>
    </source>
</evidence>
<evidence type="ECO:0007829" key="35">
    <source>
        <dbReference type="PDB" id="7PJF"/>
    </source>
</evidence>
<evidence type="ECO:0007829" key="36">
    <source>
        <dbReference type="PDB" id="7Z6S"/>
    </source>
</evidence>
<evidence type="ECO:0007829" key="37">
    <source>
        <dbReference type="PDB" id="8VT7"/>
    </source>
</evidence>
<proteinExistence type="evidence at protein level"/>
<comment type="function">
    <text evidence="9 14 16 18 19">Tubulin is the major constituent of microtubules, protein filaments consisting of alpha- and beta-tubulin heterodimers (PubMed:34996871, PubMed:38305685, PubMed:38609661). Microtubules grow by the addition of GTP-tubulin dimers to the microtubule end, where a stabilizing cap forms (PubMed:34996871, PubMed:38305685, PubMed:38609661). Below the cap, alpha-beta tubulin heterodimers are in GDP-bound state, owing to GTPase activity of alpha-tubulin (PubMed:34996871, PubMed:38609661). TUBB3 plays a critical role in proper axon guidance and maintenance (PubMed:20074521). Binding of NTN1/Netrin-1 to its receptor UNC5C might cause dissociation of UNC5C from polymerized TUBB3 in microtubules and thereby lead to increased microtubule dynamics and axon repulsion (PubMed:28483977). Plays a role in dorsal root ganglion axon projection towards the spinal cord (PubMed:28483977).</text>
</comment>
<comment type="cofactor">
    <cofactor evidence="2">
        <name>Mg(2+)</name>
        <dbReference type="ChEBI" id="CHEBI:18420"/>
    </cofactor>
</comment>
<comment type="subunit">
    <text evidence="5 12 14 15 16 17 19">Heterodimer of alpha- and beta-tubulin (PubMed:34996871, PubMed:35482892, PubMed:38305685, PubMed:38609661). A typical microtubule is a hollow water-filled tube with an outer diameter of 25 nm and an inner diameter of 15 nM (PubMed:34996871, PubMed:35482892). Alpha-beta heterodimers associate head-to-tail to form protofilaments running lengthwise along the microtubule wall with the beta-tubulin subunit facing the microtubule plus end conferring a structural polarity (PubMed:34996871, PubMed:35482892, PubMed:38305685, PubMed:38609661). Microtubules usually have 13 protofilaments but different protofilament numbers can be found in some organisms and specialized cells (PubMed:34996871, PubMed:35482892, PubMed:38305685, PubMed:38609661). Interacts with gamma-tubulin; the interaction allows microtubules to nucleate from the gamma-tubulin ring complex (gTuRC) (PubMed:38305685, PubMed:38609661). Interacts with UNC5C (via cytoplasmic domain); this interaction is decreased by NTN1/Netrin-1 (PubMed:28483977). Interacts with NLRP5/MATER at cytoskeleton microtubules (PubMed:24374158). Interacts with DPYSL5 (PubMed:33894126). Interacts with CFAP61 (By similarity).</text>
</comment>
<comment type="interaction">
    <interactant intactId="EBI-350989">
        <id>Q13509</id>
    </interactant>
    <interactant intactId="EBI-710997">
        <id>P54274</id>
        <label>TERF1</label>
    </interactant>
    <organismsDiffer>false</organismsDiffer>
    <experiments>2</experiments>
</comment>
<comment type="interaction">
    <interactant intactId="EBI-350989">
        <id>Q13509</id>
    </interactant>
    <interactant intactId="EBI-487083">
        <id>P68363</id>
        <label>TUBA1B</label>
    </interactant>
    <organismsDiffer>false</organismsDiffer>
    <experiments>4</experiments>
</comment>
<comment type="interaction">
    <interactant intactId="EBI-350989">
        <id>Q13509</id>
    </interactant>
    <interactant intactId="EBI-11343380">
        <id>O95185</id>
        <label>UNC5C</label>
    </interactant>
    <organismsDiffer>false</organismsDiffer>
    <experiments>2</experiments>
</comment>
<comment type="subcellular location">
    <subcellularLocation>
        <location evidence="16 17">Cytoplasm</location>
        <location evidence="16 17">Cytoskeleton</location>
    </subcellularLocation>
    <subcellularLocation>
        <location evidence="5">Cell projection</location>
        <location evidence="5">Growth cone</location>
    </subcellularLocation>
    <subcellularLocation>
        <location evidence="5">Cell projection</location>
        <location evidence="5">Lamellipodium</location>
    </subcellularLocation>
    <subcellularLocation>
        <location evidence="5">Cell projection</location>
        <location evidence="5">Filopodium</location>
    </subcellularLocation>
</comment>
<comment type="alternative products">
    <event type="alternative splicing"/>
    <isoform>
        <id>Q13509-1</id>
        <name>1</name>
        <sequence type="displayed"/>
    </isoform>
    <isoform>
        <id>Q13509-2</id>
        <name>2</name>
        <sequence type="described" ref="VSP_054659"/>
    </isoform>
</comment>
<comment type="tissue specificity">
    <text evidence="7 10">Expression is primarily restricted to central and peripheral nervous system. Greatly increased expression in most cancerous tissues.</text>
</comment>
<comment type="domain">
    <text>The highly acidic C-terminal region may bind cations such as calcium.</text>
</comment>
<comment type="domain">
    <text evidence="1">The MREI motif is common among all beta-tubulin isoforms and may be critical for tubulin autoregulation.</text>
</comment>
<comment type="PTM">
    <text evidence="3 13">Some glutamate residues at the C-terminus are polyglutamylated, resulting in polyglutamate chains on the gamma-carboxyl group (PubMed:26875866). Polyglutamylation plays a key role in microtubule severing by spastin (SPAST). SPAST preferentially recognizes and acts on microtubules decorated with short polyglutamate tails: severing activity by SPAST increases as the number of glutamates per tubulin rises from one to eight, but decreases beyond this glutamylation threshold (PubMed:26875866). Glutamylation is also involved in cilia motility (By similarity).</text>
</comment>
<comment type="PTM">
    <text evidence="1 22">Some glutamate residues at the C-terminus are monoglycylated but not polyglycylated due to the absence of functional TTLL10 in human. Monoglycylation is mainly limited to tubulin incorporated into cilia and flagella axonemes, which is required for their stability and maintenance. Flagella glycylation controls sperm motility. Both polyglutamylation and monoglycylation can coexist on the same protein on adjacent residues, and lowering glycylation levels increases polyglutamylation, and reciprocally.</text>
</comment>
<comment type="PTM">
    <text evidence="8">Phosphorylated on Ser-172 by CDK1 during the cell cycle, from metaphase to telophase, but not in interphase. This phosphorylation inhibits tubulin incorporation into microtubules.</text>
</comment>
<comment type="disease" evidence="9">
    <disease id="DI-02509">
        <name>Fibrosis of extraocular muscles, congenital, 3A</name>
        <acronym>CFEOM3A</acronym>
        <description>A congenital ocular motility disorder marked by restrictive ophthalmoplegia affecting extraocular muscles innervated by the oculomotor and/or trochlear nerves. It is clinically characterized by anchoring of the eyes in downward gaze, ptosis, and backward tilt of the head. Congenital fibrosis of extraocular muscles type 3 presents as a non-progressive, autosomal dominant disorder with variable expression. Patients may be bilaterally or unilaterally affected, and their oculo-motility defects range from complete ophthalmoplegia (with the eyes fixed in a hypo- and exotropic position), to mild asymptomatic restrictions of ocular movement. Ptosis, refractive error, amblyopia, and compensatory head positions are associated with the more severe forms of the disorder. In some cases, the ocular phenotype is accompanied by additional features including developmental delay, corpus callosum agenesis, basal ganglia dysmorphism, facial weakness, polyneuropathy.</description>
        <dbReference type="MIM" id="600638"/>
    </disease>
    <text>The disease is caused by variants affecting the gene represented in this entry.</text>
</comment>
<comment type="disease" evidence="11">
    <disease id="DI-03150">
        <name>Cortical dysplasia, complex, with other brain malformations 1</name>
        <acronym>CDCBM1</acronym>
        <description>A disorder of aberrant neuronal migration and disturbed axonal guidance. Affected individuals have mild to severe intellectual disability, strabismus, axial hypotonia, and spasticity. Brain imaging shows variable malformations of cortical development, including polymicrogyria, gyral disorganization, and fusion of the basal ganglia, as well as thin corpus callosum, hypoplastic brainstem, and dysplastic cerebellar vermis. Extraocular muscles are not involved.</description>
        <dbReference type="MIM" id="614039"/>
    </disease>
    <text>The disease is caused by variants affecting the gene represented in this entry.</text>
</comment>
<comment type="similarity">
    <text evidence="21">Belongs to the tubulin family.</text>
</comment>
<sequence>MREIVHIQAGQCGNQIGAKFWEVISDEHGIDPSGNYVGDSDLQLERISVYYNEASSHKYVPRAILVDLEPGTMDSVRSGAFGHLFRPDNFIFGQSGAGNNWAKGHYTEGAELVDSVLDVVRKECENCDCLQGFQLTHSLGGGTGSGMGTLLISKVREEYPDRIMNTFSVVPSPKVSDTVVEPYNATLSIHQLVENTDETYCIDNEALYDICFRTLKLATPTYGDLNHLVSATMSGVTTSLRFPGQLNADLRKLAVNMVPFPRLHFFMPGFAPLTARGSQQYRALTVPELTQQMFDAKNMMAACDPRHGRYLTVATVFRGRMSMKEVDEQMLAIQSKNSSYFVEWIPNNVKVAVCDIPPRGLKMSSTFIGNSTAIQELFKRISEQFTAMFRRKAFLHWYTGEGMDEMEFTEAESNMNDLVSEYQQYQDATAEEEGEMYEDDEEESEAQGPK</sequence>
<keyword id="KW-0002">3D-structure</keyword>
<keyword id="KW-0025">Alternative splicing</keyword>
<keyword id="KW-0966">Cell projection</keyword>
<keyword id="KW-0963">Cytoplasm</keyword>
<keyword id="KW-0206">Cytoskeleton</keyword>
<keyword id="KW-0903">Direct protein sequencing</keyword>
<keyword id="KW-0225">Disease variant</keyword>
<keyword id="KW-0342">GTP-binding</keyword>
<keyword id="KW-0991">Intellectual disability</keyword>
<keyword id="KW-1017">Isopeptide bond</keyword>
<keyword id="KW-0460">Magnesium</keyword>
<keyword id="KW-0479">Metal-binding</keyword>
<keyword id="KW-0493">Microtubule</keyword>
<keyword id="KW-0547">Nucleotide-binding</keyword>
<keyword id="KW-0597">Phosphoprotein</keyword>
<keyword id="KW-1267">Proteomics identification</keyword>
<keyword id="KW-1185">Reference proteome</keyword>
<feature type="chain" id="PRO_0000048250" description="Tubulin beta-3 chain">
    <location>
        <begin position="1"/>
        <end position="450"/>
    </location>
</feature>
<feature type="region of interest" description="Disordered" evidence="6">
    <location>
        <begin position="425"/>
        <end position="450"/>
    </location>
</feature>
<feature type="short sequence motif" description="MREI motif" evidence="1">
    <location>
        <begin position="1"/>
        <end position="4"/>
    </location>
</feature>
<feature type="compositionally biased region" description="Acidic residues" evidence="6">
    <location>
        <begin position="429"/>
        <end position="450"/>
    </location>
</feature>
<feature type="binding site" evidence="19 32">
    <location>
        <position position="10"/>
    </location>
    <ligand>
        <name>GDP</name>
        <dbReference type="ChEBI" id="CHEBI:58189"/>
    </ligand>
</feature>
<feature type="binding site" evidence="16 17 19 25 29 32">
    <location>
        <position position="11"/>
    </location>
    <ligand>
        <name>GDP</name>
        <dbReference type="ChEBI" id="CHEBI:58189"/>
    </ligand>
</feature>
<feature type="binding site" evidence="23 24 25 29">
    <location>
        <position position="11"/>
    </location>
    <ligand>
        <name>GTP</name>
        <dbReference type="ChEBI" id="CHEBI:37565"/>
    </ligand>
</feature>
<feature type="binding site" evidence="19 32">
    <location>
        <position position="12"/>
    </location>
    <ligand>
        <name>GDP</name>
        <dbReference type="ChEBI" id="CHEBI:58189"/>
    </ligand>
</feature>
<feature type="binding site" evidence="19 32">
    <location>
        <position position="15"/>
    </location>
    <ligand>
        <name>GDP</name>
        <dbReference type="ChEBI" id="CHEBI:58189"/>
    </ligand>
</feature>
<feature type="binding site" evidence="2">
    <location>
        <position position="69"/>
    </location>
    <ligand>
        <name>GTP</name>
        <dbReference type="ChEBI" id="CHEBI:37565"/>
    </ligand>
</feature>
<feature type="binding site" evidence="2">
    <location>
        <position position="69"/>
    </location>
    <ligand>
        <name>Mg(2+)</name>
        <dbReference type="ChEBI" id="CHEBI:18420"/>
    </ligand>
</feature>
<feature type="binding site" evidence="19 32">
    <location>
        <position position="99"/>
    </location>
    <ligand>
        <name>GDP</name>
        <dbReference type="ChEBI" id="CHEBI:58189"/>
    </ligand>
</feature>
<feature type="binding site" evidence="16 19 25 32">
    <location>
        <position position="138"/>
    </location>
    <ligand>
        <name>GDP</name>
        <dbReference type="ChEBI" id="CHEBI:58189"/>
    </ligand>
</feature>
<feature type="binding site" evidence="23 25">
    <location>
        <position position="138"/>
    </location>
    <ligand>
        <name>GTP</name>
        <dbReference type="ChEBI" id="CHEBI:37565"/>
    </ligand>
</feature>
<feature type="binding site" evidence="16 17 19 25 29 32">
    <location>
        <position position="142"/>
    </location>
    <ligand>
        <name>GDP</name>
        <dbReference type="ChEBI" id="CHEBI:58189"/>
    </ligand>
</feature>
<feature type="binding site" evidence="23 24 25 29">
    <location>
        <position position="142"/>
    </location>
    <ligand>
        <name>GTP</name>
        <dbReference type="ChEBI" id="CHEBI:37565"/>
    </ligand>
</feature>
<feature type="binding site" evidence="16 17 19 25 29 32">
    <location>
        <position position="143"/>
    </location>
    <ligand>
        <name>GDP</name>
        <dbReference type="ChEBI" id="CHEBI:58189"/>
    </ligand>
</feature>
<feature type="binding site" evidence="23 24 25 29">
    <location>
        <position position="143"/>
    </location>
    <ligand>
        <name>GTP</name>
        <dbReference type="ChEBI" id="CHEBI:37565"/>
    </ligand>
</feature>
<feature type="binding site" evidence="16 17 19 25 29 32">
    <location>
        <position position="144"/>
    </location>
    <ligand>
        <name>GDP</name>
        <dbReference type="ChEBI" id="CHEBI:58189"/>
    </ligand>
</feature>
<feature type="binding site" evidence="23 24 25 29">
    <location>
        <position position="144"/>
    </location>
    <ligand>
        <name>GTP</name>
        <dbReference type="ChEBI" id="CHEBI:37565"/>
    </ligand>
</feature>
<feature type="binding site" evidence="19 32">
    <location>
        <position position="177"/>
    </location>
    <ligand>
        <name>GDP</name>
        <dbReference type="ChEBI" id="CHEBI:58189"/>
    </ligand>
</feature>
<feature type="binding site" evidence="16 17 19 25 29 32">
    <location>
        <position position="204"/>
    </location>
    <ligand>
        <name>GDP</name>
        <dbReference type="ChEBI" id="CHEBI:58189"/>
    </ligand>
</feature>
<feature type="binding site" evidence="23 24 25 29">
    <location>
        <position position="204"/>
    </location>
    <ligand>
        <name>GTP</name>
        <dbReference type="ChEBI" id="CHEBI:37565"/>
    </ligand>
</feature>
<feature type="binding site" evidence="19 32">
    <location>
        <position position="222"/>
    </location>
    <ligand>
        <name>GDP</name>
        <dbReference type="ChEBI" id="CHEBI:58189"/>
    </ligand>
</feature>
<feature type="binding site" evidence="16 17 19 25 29 32">
    <location>
        <position position="226"/>
    </location>
    <ligand>
        <name>GDP</name>
        <dbReference type="ChEBI" id="CHEBI:58189"/>
    </ligand>
</feature>
<feature type="binding site" evidence="23 24 25 29">
    <location>
        <position position="226"/>
    </location>
    <ligand>
        <name>GTP</name>
        <dbReference type="ChEBI" id="CHEBI:37565"/>
    </ligand>
</feature>
<feature type="modified residue" description="Phosphoserine; by CDK1" evidence="8">
    <location>
        <position position="172"/>
    </location>
</feature>
<feature type="modified residue" description="5-glutamyl polyglutamate" evidence="4">
    <location>
        <position position="438"/>
    </location>
</feature>
<feature type="modified residue" description="Phosphoserine" evidence="4">
    <location>
        <position position="444"/>
    </location>
</feature>
<feature type="splice variant" id="VSP_054659" description="In isoform 2." evidence="20">
    <location>
        <begin position="1"/>
        <end position="72"/>
    </location>
</feature>
<feature type="sequence variant" id="VAR_062758" description="In CFEOM3A; affects heterodimers formation; results in increased stability and reduced dynamics of microtubules; dbSNP:rs864321714." evidence="9">
    <original>R</original>
    <variation>Q</variation>
    <location>
        <position position="62"/>
    </location>
</feature>
<feature type="sequence variant" id="VAR_066206" description="In CDCBM1; can form tubulin heterodimers that are properly incorporated into microtubules; the microtubules are less stable than wild-type; dbSNP:rs747480526." evidence="11">
    <original>T</original>
    <variation>M</variation>
    <location>
        <position position="178"/>
    </location>
</feature>
<feature type="sequence variant" id="VAR_066207" description="In CDCBM1; does not form tubulin heterodimers; patient fibroblasts show no major alterations in the microtubule network, but the microtubules are less stable than wild-type; dbSNP:rs878853257." evidence="11">
    <original>E</original>
    <variation>K</variation>
    <location>
        <position position="205"/>
    </location>
</feature>
<feature type="sequence variant" id="VAR_062759" description="In CFEOM3A; affects heterodimers formation; affects microtubules polymerization and depolymerization rates; dbSNP:rs267607162." evidence="9">
    <original>R</original>
    <variation>C</variation>
    <location>
        <position position="262"/>
    </location>
</feature>
<feature type="sequence variant" id="VAR_062760" description="In CFEOM3A; severe phenotype with congenital facial weakness, congenital wrist and finger contractures; affects microtubules polymerization and depolymerization rates; dbSNP:rs864321716." evidence="9">
    <original>R</original>
    <variation>H</variation>
    <location>
        <position position="262"/>
    </location>
</feature>
<feature type="sequence variant" id="VAR_062761" description="In CFEOM3A; affects heterodimers formation; results in increased stability and reduced dynamics of microtubules; dbSNP:rs267607163." evidence="9">
    <original>A</original>
    <variation>T</variation>
    <location>
        <position position="302"/>
    </location>
</feature>
<feature type="sequence variant" id="VAR_066208" description="In CDCBM1; does not form tubulin heterodimers; dbSNP:rs878853258." evidence="11">
    <original>A</original>
    <variation>V</variation>
    <location>
        <position position="302"/>
    </location>
</feature>
<feature type="sequence variant" id="VAR_066209" description="In CDCBM1; reduced heterodimers formation; dbSNP:rs878853256." evidence="11">
    <original>M</original>
    <variation>V</variation>
    <location>
        <position position="323"/>
    </location>
</feature>
<feature type="sequence variant" id="VAR_062762" description="In CFEOM3A; affects heterodimers formation; results in increased stability and reduced dynamics of microtubules; dbSNP:rs864321717." evidence="9">
    <original>R</original>
    <variation>C</variation>
    <location>
        <position position="380"/>
    </location>
</feature>
<feature type="sequence variant" id="VAR_062763" description="In CFEOM3A; severe phenotype with congenital facial weakness; lower extremity weakness and sensory loss in the second to third decade of life in one patient; affects microtubules polymerization and depolymerization rates; dbSNP:rs267607165." evidence="9">
    <original>E</original>
    <variation>K</variation>
    <location>
        <position position="410"/>
    </location>
</feature>
<feature type="sequence variant" id="VAR_062764" description="In CFEOM3A; severe phenotype with congenital facial weakness, congenital wrist and finger contractures; dbSNP:rs267607164." evidence="9">
    <original>D</original>
    <variation>H</variation>
    <location>
        <position position="417"/>
    </location>
</feature>
<feature type="sequence variant" id="VAR_062765" description="In CFEOM3A; some patients with lower extremity weakness and sensory loss in the second to third decade of life; also found in patients without CFEOM3A who developed polyneuropathy; dbSNP:rs267607164." evidence="9">
    <original>D</original>
    <variation>N</variation>
    <location>
        <position position="417"/>
    </location>
</feature>
<feature type="sequence conflict" description="In Ref. 1; AAC52035." evidence="21" ref="1">
    <original>A</original>
    <variation>R</variation>
    <location>
        <position position="275"/>
    </location>
</feature>
<feature type="strand" evidence="33">
    <location>
        <begin position="4"/>
        <end position="9"/>
    </location>
</feature>
<feature type="helix" evidence="33">
    <location>
        <begin position="10"/>
        <end position="28"/>
    </location>
</feature>
<feature type="strand" evidence="34">
    <location>
        <begin position="34"/>
        <end position="36"/>
    </location>
</feature>
<feature type="helix" evidence="33">
    <location>
        <begin position="42"/>
        <end position="45"/>
    </location>
</feature>
<feature type="helix" evidence="33">
    <location>
        <begin position="47"/>
        <end position="49"/>
    </location>
</feature>
<feature type="strand" evidence="33">
    <location>
        <begin position="51"/>
        <end position="53"/>
    </location>
</feature>
<feature type="turn" evidence="37">
    <location>
        <begin position="55"/>
        <end position="57"/>
    </location>
</feature>
<feature type="strand" evidence="33">
    <location>
        <begin position="59"/>
        <end position="61"/>
    </location>
</feature>
<feature type="strand" evidence="33">
    <location>
        <begin position="63"/>
        <end position="69"/>
    </location>
</feature>
<feature type="helix" evidence="33">
    <location>
        <begin position="71"/>
        <end position="77"/>
    </location>
</feature>
<feature type="helix" evidence="33">
    <location>
        <begin position="82"/>
        <end position="84"/>
    </location>
</feature>
<feature type="helix" evidence="33">
    <location>
        <begin position="87"/>
        <end position="89"/>
    </location>
</feature>
<feature type="strand" evidence="33">
    <location>
        <begin position="90"/>
        <end position="92"/>
    </location>
</feature>
<feature type="helix" evidence="33">
    <location>
        <begin position="101"/>
        <end position="106"/>
    </location>
</feature>
<feature type="helix" evidence="33">
    <location>
        <begin position="108"/>
        <end position="125"/>
    </location>
</feature>
<feature type="strand" evidence="33">
    <location>
        <begin position="132"/>
        <end position="142"/>
    </location>
</feature>
<feature type="helix" evidence="33">
    <location>
        <begin position="143"/>
        <end position="158"/>
    </location>
</feature>
<feature type="strand" evidence="33">
    <location>
        <begin position="162"/>
        <end position="170"/>
    </location>
</feature>
<feature type="turn" evidence="35">
    <location>
        <begin position="173"/>
        <end position="175"/>
    </location>
</feature>
<feature type="strand" evidence="36">
    <location>
        <begin position="177"/>
        <end position="180"/>
    </location>
</feature>
<feature type="helix" evidence="33">
    <location>
        <begin position="181"/>
        <end position="195"/>
    </location>
</feature>
<feature type="strand" evidence="33">
    <location>
        <begin position="197"/>
        <end position="203"/>
    </location>
</feature>
<feature type="helix" evidence="33">
    <location>
        <begin position="204"/>
        <end position="213"/>
    </location>
</feature>
<feature type="helix" evidence="33">
    <location>
        <begin position="222"/>
        <end position="241"/>
    </location>
</feature>
<feature type="strand" evidence="35">
    <location>
        <begin position="245"/>
        <end position="247"/>
    </location>
</feature>
<feature type="helix" evidence="33">
    <location>
        <begin position="250"/>
        <end position="257"/>
    </location>
</feature>
<feature type="strand" evidence="36">
    <location>
        <begin position="259"/>
        <end position="262"/>
    </location>
</feature>
<feature type="strand" evidence="33">
    <location>
        <begin position="265"/>
        <end position="272"/>
    </location>
</feature>
<feature type="helix" evidence="37">
    <location>
        <begin position="276"/>
        <end position="278"/>
    </location>
</feature>
<feature type="turn" evidence="37">
    <location>
        <begin position="279"/>
        <end position="281"/>
    </location>
</feature>
<feature type="helix" evidence="33">
    <location>
        <begin position="286"/>
        <end position="294"/>
    </location>
</feature>
<feature type="helix" evidence="33">
    <location>
        <begin position="296"/>
        <end position="298"/>
    </location>
</feature>
<feature type="strand" evidence="33">
    <location>
        <begin position="299"/>
        <end position="302"/>
    </location>
</feature>
<feature type="helix" evidence="33">
    <location>
        <begin position="305"/>
        <end position="307"/>
    </location>
</feature>
<feature type="strand" evidence="33">
    <location>
        <begin position="310"/>
        <end position="320"/>
    </location>
</feature>
<feature type="helix" evidence="33">
    <location>
        <begin position="323"/>
        <end position="335"/>
    </location>
</feature>
<feature type="helix" evidence="33">
    <location>
        <begin position="338"/>
        <end position="340"/>
    </location>
</feature>
<feature type="strand" evidence="37">
    <location>
        <begin position="345"/>
        <end position="347"/>
    </location>
</feature>
<feature type="strand" evidence="33">
    <location>
        <begin position="349"/>
        <end position="356"/>
    </location>
</feature>
<feature type="strand" evidence="36">
    <location>
        <begin position="358"/>
        <end position="362"/>
    </location>
</feature>
<feature type="strand" evidence="33">
    <location>
        <begin position="364"/>
        <end position="371"/>
    </location>
</feature>
<feature type="helix" evidence="33">
    <location>
        <begin position="372"/>
        <end position="374"/>
    </location>
</feature>
<feature type="helix" evidence="33">
    <location>
        <begin position="375"/>
        <end position="390"/>
    </location>
</feature>
<feature type="turn" evidence="33">
    <location>
        <begin position="391"/>
        <end position="394"/>
    </location>
</feature>
<feature type="helix" evidence="33">
    <location>
        <begin position="395"/>
        <end position="399"/>
    </location>
</feature>
<feature type="turn" evidence="33">
    <location>
        <begin position="400"/>
        <end position="402"/>
    </location>
</feature>
<feature type="helix" evidence="33">
    <location>
        <begin position="405"/>
        <end position="427"/>
    </location>
</feature>